<name>SYK_NEIMA</name>
<organism>
    <name type="scientific">Neisseria meningitidis serogroup A / serotype 4A (strain DSM 15465 / Z2491)</name>
    <dbReference type="NCBI Taxonomy" id="122587"/>
    <lineage>
        <taxon>Bacteria</taxon>
        <taxon>Pseudomonadati</taxon>
        <taxon>Pseudomonadota</taxon>
        <taxon>Betaproteobacteria</taxon>
        <taxon>Neisseriales</taxon>
        <taxon>Neisseriaceae</taxon>
        <taxon>Neisseria</taxon>
    </lineage>
</organism>
<sequence length="503" mass="57265">MSEQNHPQTEPQLDENQIIALRREKLHNIRQQRNAYPNDFKRDSFAADLHAQYGEIGKEELDPQGIPVKVAGRMMLKRQMGKASFATIQDVSGQIQLYLNNKGVSQEVLDDFNHWDLGDIVGAEGTLFKTNHGELTVRVSGIRLLSKSLRPLPDKHKGLSDQETKYRQRYVDLIANEESRNTFIKRSQIIQSVRNFMVGEHYLEVETPMMHPIPGGATAKPFVTHHNALDIPLYLRIAPELYLKRLVVGGLERVFEINRSFRNEGMSVRHNPEFTMIEFYEAFSDYERMMQMAEDIIRNASHTVNGTANITYNGKEVDLESPFERLTILEAIKKYNPHYTDEQLNDAEWLKKEIVKHGESLPPSPGIGSLQLALFEGCAEGKLWNPTFIVDYPVEVSPLARASDTKQGLTERFELFVVGRELANGYSELNDPEDQAERFKAQVAQKDAGDDEAMHYDADYIRAMEFGLPPTGGCGIGIDRLVMLLTDSQTIRDVILFPQMRPE</sequence>
<feature type="chain" id="PRO_0000152658" description="Lysine--tRNA ligase">
    <location>
        <begin position="1"/>
        <end position="503"/>
    </location>
</feature>
<feature type="binding site" evidence="1">
    <location>
        <position position="414"/>
    </location>
    <ligand>
        <name>Mg(2+)</name>
        <dbReference type="ChEBI" id="CHEBI:18420"/>
        <label>1</label>
    </ligand>
</feature>
<feature type="binding site" evidence="1">
    <location>
        <position position="421"/>
    </location>
    <ligand>
        <name>Mg(2+)</name>
        <dbReference type="ChEBI" id="CHEBI:18420"/>
        <label>1</label>
    </ligand>
</feature>
<feature type="binding site" evidence="1">
    <location>
        <position position="421"/>
    </location>
    <ligand>
        <name>Mg(2+)</name>
        <dbReference type="ChEBI" id="CHEBI:18420"/>
        <label>2</label>
    </ligand>
</feature>
<gene>
    <name evidence="1" type="primary">lysS</name>
    <name type="ordered locus">NMA1638</name>
</gene>
<comment type="catalytic activity">
    <reaction evidence="1">
        <text>tRNA(Lys) + L-lysine + ATP = L-lysyl-tRNA(Lys) + AMP + diphosphate</text>
        <dbReference type="Rhea" id="RHEA:20792"/>
        <dbReference type="Rhea" id="RHEA-COMP:9696"/>
        <dbReference type="Rhea" id="RHEA-COMP:9697"/>
        <dbReference type="ChEBI" id="CHEBI:30616"/>
        <dbReference type="ChEBI" id="CHEBI:32551"/>
        <dbReference type="ChEBI" id="CHEBI:33019"/>
        <dbReference type="ChEBI" id="CHEBI:78442"/>
        <dbReference type="ChEBI" id="CHEBI:78529"/>
        <dbReference type="ChEBI" id="CHEBI:456215"/>
        <dbReference type="EC" id="6.1.1.6"/>
    </reaction>
</comment>
<comment type="cofactor">
    <cofactor evidence="1">
        <name>Mg(2+)</name>
        <dbReference type="ChEBI" id="CHEBI:18420"/>
    </cofactor>
    <text evidence="1">Binds 3 Mg(2+) ions per subunit.</text>
</comment>
<comment type="subunit">
    <text evidence="1">Homodimer.</text>
</comment>
<comment type="subcellular location">
    <subcellularLocation>
        <location evidence="1">Cytoplasm</location>
    </subcellularLocation>
</comment>
<comment type="similarity">
    <text evidence="1">Belongs to the class-II aminoacyl-tRNA synthetase family.</text>
</comment>
<evidence type="ECO:0000255" key="1">
    <source>
        <dbReference type="HAMAP-Rule" id="MF_00252"/>
    </source>
</evidence>
<dbReference type="EC" id="6.1.1.6" evidence="1"/>
<dbReference type="EMBL" id="AL157959">
    <property type="protein sequence ID" value="CAM08773.1"/>
    <property type="molecule type" value="Genomic_DNA"/>
</dbReference>
<dbReference type="PIR" id="B81858">
    <property type="entry name" value="B81858"/>
</dbReference>
<dbReference type="RefSeq" id="WP_002246258.1">
    <property type="nucleotide sequence ID" value="NC_003116.1"/>
</dbReference>
<dbReference type="SMR" id="Q9JTT7"/>
<dbReference type="EnsemblBacteria" id="CAM08773">
    <property type="protein sequence ID" value="CAM08773"/>
    <property type="gene ID" value="NMA1638"/>
</dbReference>
<dbReference type="GeneID" id="93387946"/>
<dbReference type="KEGG" id="nma:NMA1638"/>
<dbReference type="HOGENOM" id="CLU_008255_6_0_4"/>
<dbReference type="Proteomes" id="UP000000626">
    <property type="component" value="Chromosome"/>
</dbReference>
<dbReference type="GO" id="GO:0005829">
    <property type="term" value="C:cytosol"/>
    <property type="evidence" value="ECO:0007669"/>
    <property type="project" value="TreeGrafter"/>
</dbReference>
<dbReference type="GO" id="GO:0005524">
    <property type="term" value="F:ATP binding"/>
    <property type="evidence" value="ECO:0007669"/>
    <property type="project" value="UniProtKB-UniRule"/>
</dbReference>
<dbReference type="GO" id="GO:0004824">
    <property type="term" value="F:lysine-tRNA ligase activity"/>
    <property type="evidence" value="ECO:0007669"/>
    <property type="project" value="UniProtKB-UniRule"/>
</dbReference>
<dbReference type="GO" id="GO:0000287">
    <property type="term" value="F:magnesium ion binding"/>
    <property type="evidence" value="ECO:0007669"/>
    <property type="project" value="UniProtKB-UniRule"/>
</dbReference>
<dbReference type="GO" id="GO:0000049">
    <property type="term" value="F:tRNA binding"/>
    <property type="evidence" value="ECO:0007669"/>
    <property type="project" value="TreeGrafter"/>
</dbReference>
<dbReference type="GO" id="GO:0006430">
    <property type="term" value="P:lysyl-tRNA aminoacylation"/>
    <property type="evidence" value="ECO:0007669"/>
    <property type="project" value="UniProtKB-UniRule"/>
</dbReference>
<dbReference type="CDD" id="cd00775">
    <property type="entry name" value="LysRS_core"/>
    <property type="match status" value="1"/>
</dbReference>
<dbReference type="CDD" id="cd04322">
    <property type="entry name" value="LysRS_N"/>
    <property type="match status" value="1"/>
</dbReference>
<dbReference type="FunFam" id="2.40.50.140:FF:000024">
    <property type="entry name" value="Lysine--tRNA ligase"/>
    <property type="match status" value="1"/>
</dbReference>
<dbReference type="FunFam" id="3.30.930.10:FF:000001">
    <property type="entry name" value="Lysine--tRNA ligase"/>
    <property type="match status" value="1"/>
</dbReference>
<dbReference type="Gene3D" id="3.30.930.10">
    <property type="entry name" value="Bira Bifunctional Protein, Domain 2"/>
    <property type="match status" value="1"/>
</dbReference>
<dbReference type="Gene3D" id="2.40.50.140">
    <property type="entry name" value="Nucleic acid-binding proteins"/>
    <property type="match status" value="1"/>
</dbReference>
<dbReference type="HAMAP" id="MF_00252">
    <property type="entry name" value="Lys_tRNA_synth_class2"/>
    <property type="match status" value="1"/>
</dbReference>
<dbReference type="InterPro" id="IPR004364">
    <property type="entry name" value="Aa-tRNA-synt_II"/>
</dbReference>
<dbReference type="InterPro" id="IPR006195">
    <property type="entry name" value="aa-tRNA-synth_II"/>
</dbReference>
<dbReference type="InterPro" id="IPR045864">
    <property type="entry name" value="aa-tRNA-synth_II/BPL/LPL"/>
</dbReference>
<dbReference type="InterPro" id="IPR002313">
    <property type="entry name" value="Lys-tRNA-ligase_II"/>
</dbReference>
<dbReference type="InterPro" id="IPR044136">
    <property type="entry name" value="Lys-tRNA-ligase_II_N"/>
</dbReference>
<dbReference type="InterPro" id="IPR018149">
    <property type="entry name" value="Lys-tRNA-synth_II_C"/>
</dbReference>
<dbReference type="InterPro" id="IPR012340">
    <property type="entry name" value="NA-bd_OB-fold"/>
</dbReference>
<dbReference type="InterPro" id="IPR004365">
    <property type="entry name" value="NA-bd_OB_tRNA"/>
</dbReference>
<dbReference type="NCBIfam" id="TIGR00499">
    <property type="entry name" value="lysS_bact"/>
    <property type="match status" value="1"/>
</dbReference>
<dbReference type="NCBIfam" id="NF001756">
    <property type="entry name" value="PRK00484.1"/>
    <property type="match status" value="1"/>
</dbReference>
<dbReference type="PANTHER" id="PTHR42918:SF15">
    <property type="entry name" value="LYSINE--TRNA LIGASE, CHLOROPLASTIC_MITOCHONDRIAL"/>
    <property type="match status" value="1"/>
</dbReference>
<dbReference type="PANTHER" id="PTHR42918">
    <property type="entry name" value="LYSYL-TRNA SYNTHETASE"/>
    <property type="match status" value="1"/>
</dbReference>
<dbReference type="Pfam" id="PF00152">
    <property type="entry name" value="tRNA-synt_2"/>
    <property type="match status" value="1"/>
</dbReference>
<dbReference type="Pfam" id="PF01336">
    <property type="entry name" value="tRNA_anti-codon"/>
    <property type="match status" value="1"/>
</dbReference>
<dbReference type="PRINTS" id="PR00982">
    <property type="entry name" value="TRNASYNTHLYS"/>
</dbReference>
<dbReference type="SUPFAM" id="SSF55681">
    <property type="entry name" value="Class II aaRS and biotin synthetases"/>
    <property type="match status" value="1"/>
</dbReference>
<dbReference type="SUPFAM" id="SSF50249">
    <property type="entry name" value="Nucleic acid-binding proteins"/>
    <property type="match status" value="1"/>
</dbReference>
<dbReference type="PROSITE" id="PS50862">
    <property type="entry name" value="AA_TRNA_LIGASE_II"/>
    <property type="match status" value="1"/>
</dbReference>
<accession>Q9JTT7</accession>
<accession>A1ISL4</accession>
<reference key="1">
    <citation type="journal article" date="2000" name="Nature">
        <title>Complete DNA sequence of a serogroup A strain of Neisseria meningitidis Z2491.</title>
        <authorList>
            <person name="Parkhill J."/>
            <person name="Achtman M."/>
            <person name="James K.D."/>
            <person name="Bentley S.D."/>
            <person name="Churcher C.M."/>
            <person name="Klee S.R."/>
            <person name="Morelli G."/>
            <person name="Basham D."/>
            <person name="Brown D."/>
            <person name="Chillingworth T."/>
            <person name="Davies R.M."/>
            <person name="Davis P."/>
            <person name="Devlin K."/>
            <person name="Feltwell T."/>
            <person name="Hamlin N."/>
            <person name="Holroyd S."/>
            <person name="Jagels K."/>
            <person name="Leather S."/>
            <person name="Moule S."/>
            <person name="Mungall K.L."/>
            <person name="Quail M.A."/>
            <person name="Rajandream M.A."/>
            <person name="Rutherford K.M."/>
            <person name="Simmonds M."/>
            <person name="Skelton J."/>
            <person name="Whitehead S."/>
            <person name="Spratt B.G."/>
            <person name="Barrell B.G."/>
        </authorList>
    </citation>
    <scope>NUCLEOTIDE SEQUENCE [LARGE SCALE GENOMIC DNA]</scope>
    <source>
        <strain>DSM 15465 / Z2491</strain>
    </source>
</reference>
<proteinExistence type="inferred from homology"/>
<keyword id="KW-0030">Aminoacyl-tRNA synthetase</keyword>
<keyword id="KW-0067">ATP-binding</keyword>
<keyword id="KW-0963">Cytoplasm</keyword>
<keyword id="KW-0436">Ligase</keyword>
<keyword id="KW-0460">Magnesium</keyword>
<keyword id="KW-0479">Metal-binding</keyword>
<keyword id="KW-0547">Nucleotide-binding</keyword>
<keyword id="KW-0648">Protein biosynthesis</keyword>
<protein>
    <recommendedName>
        <fullName evidence="1">Lysine--tRNA ligase</fullName>
        <ecNumber evidence="1">6.1.1.6</ecNumber>
    </recommendedName>
    <alternativeName>
        <fullName evidence="1">Lysyl-tRNA synthetase</fullName>
        <shortName evidence="1">LysRS</shortName>
    </alternativeName>
</protein>